<evidence type="ECO:0000250" key="1"/>
<evidence type="ECO:0000250" key="2">
    <source>
        <dbReference type="UniProtKB" id="A0R2B1"/>
    </source>
</evidence>
<evidence type="ECO:0000255" key="3"/>
<evidence type="ECO:0000256" key="4">
    <source>
        <dbReference type="SAM" id="MobiDB-lite"/>
    </source>
</evidence>
<evidence type="ECO:0000305" key="5"/>
<name>KGD_MYCSS</name>
<reference key="1">
    <citation type="submission" date="2006-06" db="EMBL/GenBank/DDBJ databases">
        <title>Complete sequence of chromosome of Mycobacterium sp. MCS.</title>
        <authorList>
            <consortium name="US DOE Joint Genome Institute"/>
            <person name="Copeland A."/>
            <person name="Lucas S."/>
            <person name="Lapidus A."/>
            <person name="Barry K."/>
            <person name="Detter J.C."/>
            <person name="Glavina del Rio T."/>
            <person name="Hammon N."/>
            <person name="Israni S."/>
            <person name="Dalin E."/>
            <person name="Tice H."/>
            <person name="Pitluck S."/>
            <person name="Martinez M."/>
            <person name="Schmutz J."/>
            <person name="Larimer F."/>
            <person name="Land M."/>
            <person name="Hauser L."/>
            <person name="Kyrpides N."/>
            <person name="Kim E."/>
            <person name="Miller C.D."/>
            <person name="Hughes J.E."/>
            <person name="Anderson A.J."/>
            <person name="Sims R.C."/>
            <person name="Richardson P."/>
        </authorList>
    </citation>
    <scope>NUCLEOTIDE SEQUENCE [LARGE SCALE GENOMIC DNA]</scope>
    <source>
        <strain>MCS</strain>
    </source>
</reference>
<dbReference type="EC" id="2.2.1.5"/>
<dbReference type="EC" id="4.1.1.71"/>
<dbReference type="EC" id="1.2.4.2"/>
<dbReference type="EC" id="2.3.1.61"/>
<dbReference type="EMBL" id="CP000384">
    <property type="protein sequence ID" value="ABG10078.1"/>
    <property type="molecule type" value="Genomic_DNA"/>
</dbReference>
<dbReference type="SMR" id="Q1B4V6"/>
<dbReference type="KEGG" id="mmc:Mmcs_3973"/>
<dbReference type="HOGENOM" id="CLU_004709_1_0_11"/>
<dbReference type="BioCyc" id="MSP164756:G1G6O-4058-MONOMER"/>
<dbReference type="UniPathway" id="UPA00223">
    <property type="reaction ID" value="UER00997"/>
</dbReference>
<dbReference type="UniPathway" id="UPA00223">
    <property type="reaction ID" value="UER01001"/>
</dbReference>
<dbReference type="GO" id="GO:0005829">
    <property type="term" value="C:cytosol"/>
    <property type="evidence" value="ECO:0007669"/>
    <property type="project" value="TreeGrafter"/>
</dbReference>
<dbReference type="GO" id="GO:0045252">
    <property type="term" value="C:oxoglutarate dehydrogenase complex"/>
    <property type="evidence" value="ECO:0007669"/>
    <property type="project" value="TreeGrafter"/>
</dbReference>
<dbReference type="GO" id="GO:0050439">
    <property type="term" value="F:2-hydroxy-3-oxoadipate synthase activity"/>
    <property type="evidence" value="ECO:0007669"/>
    <property type="project" value="UniProtKB-EC"/>
</dbReference>
<dbReference type="GO" id="GO:0008683">
    <property type="term" value="F:2-oxoglutarate decarboxylase activity"/>
    <property type="evidence" value="ECO:0007669"/>
    <property type="project" value="UniProtKB-EC"/>
</dbReference>
<dbReference type="GO" id="GO:0004149">
    <property type="term" value="F:dihydrolipoyllysine-residue succinyltransferase activity"/>
    <property type="evidence" value="ECO:0007669"/>
    <property type="project" value="UniProtKB-EC"/>
</dbReference>
<dbReference type="GO" id="GO:0000287">
    <property type="term" value="F:magnesium ion binding"/>
    <property type="evidence" value="ECO:0007669"/>
    <property type="project" value="UniProtKB-ARBA"/>
</dbReference>
<dbReference type="GO" id="GO:0004591">
    <property type="term" value="F:oxoglutarate dehydrogenase (succinyl-transferring) activity"/>
    <property type="evidence" value="ECO:0007669"/>
    <property type="project" value="UniProtKB-EC"/>
</dbReference>
<dbReference type="GO" id="GO:0030976">
    <property type="term" value="F:thiamine pyrophosphate binding"/>
    <property type="evidence" value="ECO:0007669"/>
    <property type="project" value="InterPro"/>
</dbReference>
<dbReference type="GO" id="GO:0006099">
    <property type="term" value="P:tricarboxylic acid cycle"/>
    <property type="evidence" value="ECO:0007669"/>
    <property type="project" value="UniProtKB-UniPathway"/>
</dbReference>
<dbReference type="CDD" id="cd02016">
    <property type="entry name" value="TPP_E1_OGDC_like"/>
    <property type="match status" value="1"/>
</dbReference>
<dbReference type="FunFam" id="3.40.50.11610:FF:000002">
    <property type="entry name" value="2-oxoglutarate dehydrogenase E1 component"/>
    <property type="match status" value="1"/>
</dbReference>
<dbReference type="FunFam" id="3.40.50.970:FF:000018">
    <property type="entry name" value="2-oxoglutarate dehydrogenase E1 component"/>
    <property type="match status" value="1"/>
</dbReference>
<dbReference type="Gene3D" id="3.40.50.12470">
    <property type="match status" value="1"/>
</dbReference>
<dbReference type="Gene3D" id="3.40.50.970">
    <property type="match status" value="1"/>
</dbReference>
<dbReference type="Gene3D" id="3.30.559.10">
    <property type="entry name" value="Chloramphenicol acetyltransferase-like domain"/>
    <property type="match status" value="1"/>
</dbReference>
<dbReference type="Gene3D" id="3.40.50.11610">
    <property type="entry name" value="Multifunctional 2-oxoglutarate metabolism enzyme, C-terminal domain"/>
    <property type="match status" value="1"/>
</dbReference>
<dbReference type="Gene3D" id="1.10.287.1150">
    <property type="entry name" value="TPP helical domain"/>
    <property type="match status" value="1"/>
</dbReference>
<dbReference type="InterPro" id="IPR001078">
    <property type="entry name" value="2-oxoacid_DH_actylTfrase"/>
</dbReference>
<dbReference type="InterPro" id="IPR032106">
    <property type="entry name" value="2-oxogl_dehyd_N"/>
</dbReference>
<dbReference type="InterPro" id="IPR011603">
    <property type="entry name" value="2oxoglutarate_DH_E1"/>
</dbReference>
<dbReference type="InterPro" id="IPR023213">
    <property type="entry name" value="CAT-like_dom_sf"/>
</dbReference>
<dbReference type="InterPro" id="IPR001017">
    <property type="entry name" value="DH_E1"/>
</dbReference>
<dbReference type="InterPro" id="IPR042179">
    <property type="entry name" value="KGD_C_sf"/>
</dbReference>
<dbReference type="InterPro" id="IPR031717">
    <property type="entry name" value="ODO-1/KGD_C"/>
</dbReference>
<dbReference type="InterPro" id="IPR029061">
    <property type="entry name" value="THDP-binding"/>
</dbReference>
<dbReference type="InterPro" id="IPR005475">
    <property type="entry name" value="Transketolase-like_Pyr-bd"/>
</dbReference>
<dbReference type="NCBIfam" id="TIGR00239">
    <property type="entry name" value="2oxo_dh_E1"/>
    <property type="match status" value="1"/>
</dbReference>
<dbReference type="NCBIfam" id="NF006914">
    <property type="entry name" value="PRK09404.1"/>
    <property type="match status" value="1"/>
</dbReference>
<dbReference type="NCBIfam" id="NF008907">
    <property type="entry name" value="PRK12270.1"/>
    <property type="match status" value="1"/>
</dbReference>
<dbReference type="PANTHER" id="PTHR23152:SF4">
    <property type="entry name" value="2-OXOADIPATE DEHYDROGENASE COMPLEX COMPONENT E1"/>
    <property type="match status" value="1"/>
</dbReference>
<dbReference type="PANTHER" id="PTHR23152">
    <property type="entry name" value="2-OXOGLUTARATE DEHYDROGENASE"/>
    <property type="match status" value="1"/>
</dbReference>
<dbReference type="Pfam" id="PF00198">
    <property type="entry name" value="2-oxoacid_dh"/>
    <property type="match status" value="1"/>
</dbReference>
<dbReference type="Pfam" id="PF16078">
    <property type="entry name" value="2-oxogl_dehyd_N"/>
    <property type="match status" value="1"/>
</dbReference>
<dbReference type="Pfam" id="PF00676">
    <property type="entry name" value="E1_dh"/>
    <property type="match status" value="1"/>
</dbReference>
<dbReference type="Pfam" id="PF16870">
    <property type="entry name" value="OxoGdeHyase_C"/>
    <property type="match status" value="1"/>
</dbReference>
<dbReference type="Pfam" id="PF02779">
    <property type="entry name" value="Transket_pyr"/>
    <property type="match status" value="1"/>
</dbReference>
<dbReference type="PIRSF" id="PIRSF000157">
    <property type="entry name" value="Oxoglu_dh_E1"/>
    <property type="match status" value="1"/>
</dbReference>
<dbReference type="SMART" id="SM00861">
    <property type="entry name" value="Transket_pyr"/>
    <property type="match status" value="1"/>
</dbReference>
<dbReference type="SUPFAM" id="SSF52777">
    <property type="entry name" value="CoA-dependent acyltransferases"/>
    <property type="match status" value="1"/>
</dbReference>
<dbReference type="SUPFAM" id="SSF52518">
    <property type="entry name" value="Thiamin diphosphate-binding fold (THDP-binding)"/>
    <property type="match status" value="2"/>
</dbReference>
<feature type="chain" id="PRO_0000310721" description="Multifunctional 2-oxoglutarate metabolism enzyme">
    <location>
        <begin position="1"/>
        <end position="1269"/>
    </location>
</feature>
<feature type="region of interest" description="2-oxoglutarate dehydrogenase E1, N-terminal part">
    <location>
        <begin position="1"/>
        <end position="41"/>
    </location>
</feature>
<feature type="region of interest" description="Disordered" evidence="4">
    <location>
        <begin position="23"/>
        <end position="145"/>
    </location>
</feature>
<feature type="region of interest" description="Linker">
    <location>
        <begin position="42"/>
        <end position="107"/>
    </location>
</feature>
<feature type="region of interest" description="Succinyltransferase E2">
    <location>
        <begin position="108"/>
        <end position="378"/>
    </location>
</feature>
<feature type="region of interest" description="2-oxoglutarate dehydrogenase E1, C-terminal part">
    <location>
        <begin position="379"/>
        <end position="1269"/>
    </location>
</feature>
<feature type="coiled-coil region" evidence="3">
    <location>
        <begin position="824"/>
        <end position="855"/>
    </location>
</feature>
<feature type="compositionally biased region" description="Basic and acidic residues" evidence="4">
    <location>
        <begin position="23"/>
        <end position="37"/>
    </location>
</feature>
<feature type="compositionally biased region" description="Polar residues" evidence="4">
    <location>
        <begin position="43"/>
        <end position="58"/>
    </location>
</feature>
<feature type="compositionally biased region" description="Pro residues" evidence="4">
    <location>
        <begin position="63"/>
        <end position="75"/>
    </location>
</feature>
<feature type="active site" description="Proton acceptor; for succinyltransferase activity" evidence="1">
    <location>
        <position position="357"/>
    </location>
</feature>
<feature type="binding site" evidence="2">
    <location>
        <position position="583"/>
    </location>
    <ligand>
        <name>thiamine diphosphate</name>
        <dbReference type="ChEBI" id="CHEBI:58937"/>
    </ligand>
</feature>
<feature type="binding site" evidence="2">
    <location>
        <position position="622"/>
    </location>
    <ligand>
        <name>2-oxoglutarate</name>
        <dbReference type="ChEBI" id="CHEBI:16810"/>
    </ligand>
</feature>
<feature type="binding site" evidence="2">
    <location>
        <position position="647"/>
    </location>
    <ligand>
        <name>2-oxoglutarate</name>
        <dbReference type="ChEBI" id="CHEBI:16810"/>
    </ligand>
</feature>
<feature type="binding site" evidence="2">
    <location>
        <position position="647"/>
    </location>
    <ligand>
        <name>thiamine diphosphate</name>
        <dbReference type="ChEBI" id="CHEBI:58937"/>
    </ligand>
</feature>
<feature type="binding site" evidence="2">
    <location>
        <position position="649"/>
    </location>
    <ligand>
        <name>thiamine diphosphate</name>
        <dbReference type="ChEBI" id="CHEBI:58937"/>
    </ligand>
</feature>
<feature type="binding site" evidence="2">
    <location>
        <position position="686"/>
    </location>
    <ligand>
        <name>Mg(2+)</name>
        <dbReference type="ChEBI" id="CHEBI:18420"/>
    </ligand>
</feature>
<feature type="binding site" evidence="2">
    <location>
        <position position="686"/>
    </location>
    <ligand>
        <name>thiamine diphosphate</name>
        <dbReference type="ChEBI" id="CHEBI:58937"/>
    </ligand>
</feature>
<feature type="binding site" evidence="2">
    <location>
        <position position="687"/>
    </location>
    <ligand>
        <name>thiamine diphosphate</name>
        <dbReference type="ChEBI" id="CHEBI:58937"/>
    </ligand>
</feature>
<feature type="binding site" evidence="2">
    <location>
        <position position="688"/>
    </location>
    <ligand>
        <name>thiamine diphosphate</name>
        <dbReference type="ChEBI" id="CHEBI:58937"/>
    </ligand>
</feature>
<feature type="binding site" evidence="2">
    <location>
        <position position="719"/>
    </location>
    <ligand>
        <name>Mg(2+)</name>
        <dbReference type="ChEBI" id="CHEBI:18420"/>
    </ligand>
</feature>
<feature type="binding site" evidence="2">
    <location>
        <position position="719"/>
    </location>
    <ligand>
        <name>thiamine diphosphate</name>
        <dbReference type="ChEBI" id="CHEBI:58937"/>
    </ligand>
</feature>
<feature type="binding site" evidence="2">
    <location>
        <position position="721"/>
    </location>
    <ligand>
        <name>Mg(2+)</name>
        <dbReference type="ChEBI" id="CHEBI:18420"/>
    </ligand>
</feature>
<feature type="binding site" evidence="2">
    <location>
        <position position="1061"/>
    </location>
    <ligand>
        <name>2-oxoglutarate</name>
        <dbReference type="ChEBI" id="CHEBI:16810"/>
    </ligand>
</feature>
<feature type="binding site" evidence="2">
    <location>
        <position position="1079"/>
    </location>
    <ligand>
        <name>acetyl-CoA</name>
        <dbReference type="ChEBI" id="CHEBI:57288"/>
        <note>allosteric activator</note>
    </ligand>
</feature>
<feature type="binding site" evidence="2">
    <location>
        <position position="1095"/>
    </location>
    <ligand>
        <name>acetyl-CoA</name>
        <dbReference type="ChEBI" id="CHEBI:57288"/>
        <note>allosteric activator</note>
    </ligand>
</feature>
<feature type="binding site" evidence="2">
    <location>
        <position position="1130"/>
    </location>
    <ligand>
        <name>acetyl-CoA</name>
        <dbReference type="ChEBI" id="CHEBI:57288"/>
        <note>allosteric activator</note>
    </ligand>
</feature>
<feature type="binding site" evidence="2">
    <location>
        <position position="1133"/>
    </location>
    <ligand>
        <name>acetyl-CoA</name>
        <dbReference type="ChEBI" id="CHEBI:57288"/>
        <note>allosteric activator</note>
    </ligand>
</feature>
<feature type="binding site" evidence="2">
    <location>
        <position position="1183"/>
    </location>
    <ligand>
        <name>acetyl-CoA</name>
        <dbReference type="ChEBI" id="CHEBI:57288"/>
        <note>allosteric activator</note>
    </ligand>
</feature>
<feature type="binding site" evidence="2">
    <location>
        <position position="1190"/>
    </location>
    <ligand>
        <name>acetyl-CoA</name>
        <dbReference type="ChEBI" id="CHEBI:57288"/>
        <note>allosteric activator</note>
    </ligand>
</feature>
<feature type="binding site" evidence="2">
    <location>
        <position position="1191"/>
    </location>
    <ligand>
        <name>acetyl-CoA</name>
        <dbReference type="ChEBI" id="CHEBI:57288"/>
        <note>allosteric activator</note>
    </ligand>
</feature>
<accession>Q1B4V6</accession>
<sequence length="1269" mass="140119">MSSSPSPFGQNEWLVEEMYRKFREDPSSVDPSWHEFLVDYNPEPTTDSSASENGQQTRTAAPKAPPEPAPAPAPKTPDSKTPDSKSQAPKQDSKPQESKPQAKAKPAESKSSTKPADAKSEKSGKSGTNGAAKPAAQPADDSDQNQVLRGAAAAVAKNMSASLDVPTATSVRAIPAKLMIDNRVVINNHLKRTRGGKISFTHLIGYAIVAAVKKFPNMNRHFAEVDGKPNAVTPAHTNLGLAIDLQGKDGNRQLVVAAIKKADTMRFGQFIAAYEDIVRRARDGKLTAEDFSGVTISLTNPGTIGTVHSVPRLMRGQGAIIGVGAMEYPAEFQGASEERIADLGIGKLITLTSTYDHRIIQGAESGDFLRTVHQLLLSDDFFDEIFRELGIPYEPVRWRTDNPDSIEDKNARVIELIAAYRNRGHLMADIDPLRLDSNRFRSHPDLDVLTHGLTLWDLDREFKVNGFAGAERKKLRDVLAVLRDAYCRHIGVEYTHILEPEQQQWLQERIEGKHEKPTVAQQKYILSRLNAAEAFETFLQTKYVGQKRFSLEGAETVIPAMDAVIDQCAEHALDEVVIGMPHRGRLNVLANIVGKPYSQIFSEFEGNLNPSQAHGSGDVKYHLGSSGTYLQMFGDNDITVSLTANPSHLEAVDPVMEGLVRAKQDLLDKGDTEDGYTVVPLMLHGDAAFAGQGVVAETLNLALLRGYRTGGTIHLIVNNQIGFTTSPAAAKSSEYCTDVAKMIGAPIFHVNGDDPEAAVWVSRLAVDFRQKFKKDVVIDLLCYRRRGHNEGDDPSMTQPSMYDVIDTKRGVRKSYTEALIGRGDISMKEAEDALRDYQGQLEQVFNEVRELEKHEIEPSESVEADQQIPAKLATAVDKSLLARIGDAHLAVPEGFTVHPRVKPVLEKRREMAYEGKVDWAFAELLALGTMISEGKLVRLSGQDTRRGTFTQRHSVVIDRKTGKEFTPLQLLATDSDGNPTGGKFLVYDSPLSEFAAVGFEYGYSVGNPDAMVLWEAQFGDFINGAQSIIDEFISSGEAKWGQLSDVVLLLPHGHEGQGPDHTSGRIERFLQLWAEGSMTIALPSTPANYFHLLRRHSLDGIQRPLIVFTPKSMLRNKAAVSDIRDFTEQKFRSVLEEPTYTDGDGDRNKVTRILLTSGKIYYELVARKNKESRDDVAIVRIEQLAPLPKRRLAETLDKYPNVEEKFWVQEEPANQGAWPTFGLTLPEMLPDHFTGIKRISRRAMSAPSSGSSKVHAVEQQEILDEAFAP</sequence>
<organism>
    <name type="scientific">Mycobacterium sp. (strain MCS)</name>
    <dbReference type="NCBI Taxonomy" id="164756"/>
    <lineage>
        <taxon>Bacteria</taxon>
        <taxon>Bacillati</taxon>
        <taxon>Actinomycetota</taxon>
        <taxon>Actinomycetes</taxon>
        <taxon>Mycobacteriales</taxon>
        <taxon>Mycobacteriaceae</taxon>
        <taxon>Mycobacterium</taxon>
    </lineage>
</organism>
<gene>
    <name type="primary">kgd</name>
    <name type="ordered locus">Mmcs_3973</name>
</gene>
<comment type="function">
    <text evidence="1">Shows three enzymatic activities that share a first common step, the attack of thiamine-PP on 2-oxoglutarate (alpha-ketoglutarate, KG), leading to the formation of an enamine-thiamine-PP intermediate upon decarboxylation. Thus, displays KGD activity, catalyzing the decarboxylation from five-carbon 2-oxoglutarate to four-carbon succinate semialdehyde (SSA). Also catalyzes C-C bond formation between the activated aldehyde formed after decarboxylation of alpha-ketoglutarate and the carbonyl of glyoxylate (GLX), to yield 2-hydroxy-3-oxoadipate (HOA), which spontaneously decarboxylates to form 5-hydroxylevulinate (HLA). And is also a component of the 2-oxoglutarate dehydrogenase (ODH) complex, that catalyzes the overall conversion of 2-oxoglutarate to succinyl-CoA and CO(2). The KG decarboxylase and KG dehydrogenase reactions provide two alternative, tightly regulated, pathways connecting the oxidative and reductive branches of the TCA cycle (By similarity).</text>
</comment>
<comment type="catalytic activity">
    <reaction>
        <text>glyoxylate + 2-oxoglutarate + H(+) = 2-hydroxy-3-oxoadipate + CO2</text>
        <dbReference type="Rhea" id="RHEA:14341"/>
        <dbReference type="ChEBI" id="CHEBI:15378"/>
        <dbReference type="ChEBI" id="CHEBI:16526"/>
        <dbReference type="ChEBI" id="CHEBI:16810"/>
        <dbReference type="ChEBI" id="CHEBI:36655"/>
        <dbReference type="ChEBI" id="CHEBI:57712"/>
        <dbReference type="EC" id="2.2.1.5"/>
    </reaction>
</comment>
<comment type="catalytic activity">
    <reaction>
        <text>2-oxoglutarate + H(+) = succinate semialdehyde + CO2</text>
        <dbReference type="Rhea" id="RHEA:10524"/>
        <dbReference type="ChEBI" id="CHEBI:15378"/>
        <dbReference type="ChEBI" id="CHEBI:16526"/>
        <dbReference type="ChEBI" id="CHEBI:16810"/>
        <dbReference type="ChEBI" id="CHEBI:57706"/>
        <dbReference type="EC" id="4.1.1.71"/>
    </reaction>
</comment>
<comment type="catalytic activity">
    <reaction>
        <text>N(6)-[(R)-lipoyl]-L-lysyl-[protein] + 2-oxoglutarate + H(+) = N(6)-[(R)-S(8)-succinyldihydrolipoyl]-L-lysyl-[protein] + CO2</text>
        <dbReference type="Rhea" id="RHEA:12188"/>
        <dbReference type="Rhea" id="RHEA-COMP:10474"/>
        <dbReference type="Rhea" id="RHEA-COMP:20092"/>
        <dbReference type="ChEBI" id="CHEBI:15378"/>
        <dbReference type="ChEBI" id="CHEBI:16526"/>
        <dbReference type="ChEBI" id="CHEBI:16810"/>
        <dbReference type="ChEBI" id="CHEBI:83099"/>
        <dbReference type="ChEBI" id="CHEBI:83120"/>
        <dbReference type="EC" id="1.2.4.2"/>
    </reaction>
</comment>
<comment type="catalytic activity">
    <reaction>
        <text>N(6)-[(R)-dihydrolipoyl]-L-lysyl-[protein] + succinyl-CoA = N(6)-[(R)-S(8)-succinyldihydrolipoyl]-L-lysyl-[protein] + CoA</text>
        <dbReference type="Rhea" id="RHEA:15213"/>
        <dbReference type="Rhea" id="RHEA-COMP:10475"/>
        <dbReference type="Rhea" id="RHEA-COMP:20092"/>
        <dbReference type="ChEBI" id="CHEBI:57287"/>
        <dbReference type="ChEBI" id="CHEBI:57292"/>
        <dbReference type="ChEBI" id="CHEBI:83100"/>
        <dbReference type="ChEBI" id="CHEBI:83120"/>
        <dbReference type="EC" id="2.3.1.61"/>
    </reaction>
</comment>
<comment type="cofactor">
    <cofactor evidence="1">
        <name>Mg(2+)</name>
        <dbReference type="ChEBI" id="CHEBI:18420"/>
    </cofactor>
</comment>
<comment type="cofactor">
    <cofactor evidence="1">
        <name>thiamine diphosphate</name>
        <dbReference type="ChEBI" id="CHEBI:58937"/>
    </cofactor>
</comment>
<comment type="activity regulation">
    <text evidence="1">Alpha-ketoglutarate dehydrogenase and decarboxylase activities are inhibited by unphosphorylated GarA, and allosterically activated by acetyl-CoA, the main substrate of the TCA cycle.</text>
</comment>
<comment type="pathway">
    <text>Carbohydrate metabolism; tricarboxylic acid cycle; succinate from 2-oxoglutarate (transferase route): step 1/2.</text>
</comment>
<comment type="pathway">
    <text>Carbohydrate metabolism; tricarboxylic acid cycle; succinyl-CoA from 2-oxoglutarate (dehydrogenase route): step 1/1.</text>
</comment>
<comment type="subunit">
    <text evidence="1">Homodimer. The 2-oxoglutarate dehydrogenase (ODH) complex contains multiple copies of three enzymatic components: 2-oxoglutarate dehydrogenase (E1), dihydrolipoamide succinyltransferase (E2) and lipoamide dehydrogenase (E3) (By similarity).</text>
</comment>
<comment type="domain">
    <text evidence="1">Is a fusion protein with two major domains exhibiting structural features of an E1 and E2 protein, and a short sequence stretch of E1 localized at the N-terminus, which is connected by a linker region to the rest of the protein.</text>
</comment>
<comment type="similarity">
    <text evidence="5">Belongs to the 2-oxoacid dehydrogenase family. Kgd subfamily.</text>
</comment>
<proteinExistence type="inferred from homology"/>
<keyword id="KW-0012">Acyltransferase</keyword>
<keyword id="KW-0021">Allosteric enzyme</keyword>
<keyword id="KW-0175">Coiled coil</keyword>
<keyword id="KW-0210">Decarboxylase</keyword>
<keyword id="KW-0456">Lyase</keyword>
<keyword id="KW-0460">Magnesium</keyword>
<keyword id="KW-0479">Metal-binding</keyword>
<keyword id="KW-0511">Multifunctional enzyme</keyword>
<keyword id="KW-0560">Oxidoreductase</keyword>
<keyword id="KW-0786">Thiamine pyrophosphate</keyword>
<keyword id="KW-0808">Transferase</keyword>
<keyword id="KW-0816">Tricarboxylic acid cycle</keyword>
<protein>
    <recommendedName>
        <fullName>Multifunctional 2-oxoglutarate metabolism enzyme</fullName>
    </recommendedName>
    <alternativeName>
        <fullName>2-hydroxy-3-oxoadipate synthase</fullName>
        <shortName>HOA synthase</shortName>
        <shortName>HOAS</shortName>
        <ecNumber>2.2.1.5</ecNumber>
    </alternativeName>
    <alternativeName>
        <fullName>2-oxoglutarate carboxy-lyase</fullName>
    </alternativeName>
    <alternativeName>
        <fullName>2-oxoglutarate decarboxylase</fullName>
    </alternativeName>
    <alternativeName>
        <fullName>Alpha-ketoglutarate decarboxylase</fullName>
        <shortName>KG decarboxylase</shortName>
        <shortName>KGD</shortName>
        <ecNumber>4.1.1.71</ecNumber>
    </alternativeName>
    <alternativeName>
        <fullName>Alpha-ketoglutarate-glyoxylate carboligase</fullName>
    </alternativeName>
    <domain>
        <recommendedName>
            <fullName>2-oxoglutarate dehydrogenase E1 component</fullName>
            <shortName>ODH E1 component</shortName>
            <ecNumber>1.2.4.2</ecNumber>
        </recommendedName>
        <alternativeName>
            <fullName>Alpha-ketoglutarate dehydrogenase E1 component</fullName>
            <shortName>KDH E1 component</shortName>
        </alternativeName>
    </domain>
    <domain>
        <recommendedName>
            <fullName>Dihydrolipoyllysine-residue succinyltransferase component of 2-oxoglutarate dehydrogenase complex</fullName>
            <ecNumber>2.3.1.61</ecNumber>
        </recommendedName>
        <alternativeName>
            <fullName>2-oxoglutarate dehydrogenase complex E2 component</fullName>
            <shortName>ODH E2 component</shortName>
            <shortName>OGDC-E2</shortName>
        </alternativeName>
        <alternativeName>
            <fullName>Dihydrolipoamide succinyltransferase</fullName>
        </alternativeName>
    </domain>
</protein>